<comment type="function">
    <text evidence="1">Catalyzes the interconversion of 2-phosphoglycerate and 3-phosphoglycerate.</text>
</comment>
<comment type="catalytic activity">
    <reaction evidence="1">
        <text>(2R)-2-phosphoglycerate = (2R)-3-phosphoglycerate</text>
        <dbReference type="Rhea" id="RHEA:15901"/>
        <dbReference type="ChEBI" id="CHEBI:58272"/>
        <dbReference type="ChEBI" id="CHEBI:58289"/>
        <dbReference type="EC" id="5.4.2.12"/>
    </reaction>
</comment>
<comment type="cofactor">
    <cofactor evidence="1">
        <name>Mn(2+)</name>
        <dbReference type="ChEBI" id="CHEBI:29035"/>
    </cofactor>
    <text evidence="1">Binds 2 manganese ions per subunit.</text>
</comment>
<comment type="pathway">
    <text evidence="1">Carbohydrate degradation; glycolysis; pyruvate from D-glyceraldehyde 3-phosphate: step 3/5.</text>
</comment>
<comment type="subunit">
    <text evidence="1">Monomer.</text>
</comment>
<comment type="similarity">
    <text evidence="1">Belongs to the BPG-independent phosphoglycerate mutase family.</text>
</comment>
<dbReference type="EC" id="5.4.2.12" evidence="1"/>
<dbReference type="EMBL" id="BA000022">
    <property type="protein sequence ID" value="BAA18611.1"/>
    <property type="molecule type" value="Genomic_DNA"/>
</dbReference>
<dbReference type="PIR" id="S76482">
    <property type="entry name" value="S76482"/>
</dbReference>
<dbReference type="SMR" id="P74507"/>
<dbReference type="FunCoup" id="P74507">
    <property type="interactions" value="320"/>
</dbReference>
<dbReference type="IntAct" id="P74507">
    <property type="interactions" value="1"/>
</dbReference>
<dbReference type="STRING" id="1148.gene:10499494"/>
<dbReference type="PaxDb" id="1148-1653699"/>
<dbReference type="EnsemblBacteria" id="BAA18611">
    <property type="protein sequence ID" value="BAA18611"/>
    <property type="gene ID" value="BAA18611"/>
</dbReference>
<dbReference type="KEGG" id="syn:slr1945"/>
<dbReference type="eggNOG" id="COG0696">
    <property type="taxonomic scope" value="Bacteria"/>
</dbReference>
<dbReference type="InParanoid" id="P74507"/>
<dbReference type="PhylomeDB" id="P74507"/>
<dbReference type="BioCyc" id="MetaCyc:MONOMER-22033"/>
<dbReference type="UniPathway" id="UPA00109">
    <property type="reaction ID" value="UER00186"/>
</dbReference>
<dbReference type="Proteomes" id="UP000001425">
    <property type="component" value="Chromosome"/>
</dbReference>
<dbReference type="GO" id="GO:0005829">
    <property type="term" value="C:cytosol"/>
    <property type="evidence" value="ECO:0000318"/>
    <property type="project" value="GO_Central"/>
</dbReference>
<dbReference type="GO" id="GO:0030145">
    <property type="term" value="F:manganese ion binding"/>
    <property type="evidence" value="ECO:0000318"/>
    <property type="project" value="GO_Central"/>
</dbReference>
<dbReference type="GO" id="GO:0004619">
    <property type="term" value="F:phosphoglycerate mutase activity"/>
    <property type="evidence" value="ECO:0000318"/>
    <property type="project" value="GO_Central"/>
</dbReference>
<dbReference type="GO" id="GO:0005975">
    <property type="term" value="P:carbohydrate metabolic process"/>
    <property type="evidence" value="ECO:0000318"/>
    <property type="project" value="GO_Central"/>
</dbReference>
<dbReference type="GO" id="GO:0006007">
    <property type="term" value="P:glucose catabolic process"/>
    <property type="evidence" value="ECO:0007669"/>
    <property type="project" value="InterPro"/>
</dbReference>
<dbReference type="GO" id="GO:0006096">
    <property type="term" value="P:glycolytic process"/>
    <property type="evidence" value="ECO:0007669"/>
    <property type="project" value="UniProtKB-UniRule"/>
</dbReference>
<dbReference type="CDD" id="cd16010">
    <property type="entry name" value="iPGM"/>
    <property type="match status" value="1"/>
</dbReference>
<dbReference type="FunFam" id="3.40.1450.10:FF:000002">
    <property type="entry name" value="2,3-bisphosphoglycerate-independent phosphoglycerate mutase"/>
    <property type="match status" value="1"/>
</dbReference>
<dbReference type="Gene3D" id="3.40.720.10">
    <property type="entry name" value="Alkaline Phosphatase, subunit A"/>
    <property type="match status" value="1"/>
</dbReference>
<dbReference type="Gene3D" id="3.40.1450.10">
    <property type="entry name" value="BPG-independent phosphoglycerate mutase, domain B"/>
    <property type="match status" value="1"/>
</dbReference>
<dbReference type="HAMAP" id="MF_01038">
    <property type="entry name" value="GpmI"/>
    <property type="match status" value="1"/>
</dbReference>
<dbReference type="InterPro" id="IPR017850">
    <property type="entry name" value="Alkaline_phosphatase_core_sf"/>
</dbReference>
<dbReference type="InterPro" id="IPR011258">
    <property type="entry name" value="BPG-indep_PGM_N"/>
</dbReference>
<dbReference type="InterPro" id="IPR006124">
    <property type="entry name" value="Metalloenzyme"/>
</dbReference>
<dbReference type="InterPro" id="IPR036646">
    <property type="entry name" value="PGAM_B_sf"/>
</dbReference>
<dbReference type="InterPro" id="IPR005995">
    <property type="entry name" value="Pgm_bpd_ind"/>
</dbReference>
<dbReference type="NCBIfam" id="TIGR01307">
    <property type="entry name" value="pgm_bpd_ind"/>
    <property type="match status" value="1"/>
</dbReference>
<dbReference type="PANTHER" id="PTHR31637">
    <property type="entry name" value="2,3-BISPHOSPHOGLYCERATE-INDEPENDENT PHOSPHOGLYCERATE MUTASE"/>
    <property type="match status" value="1"/>
</dbReference>
<dbReference type="PANTHER" id="PTHR31637:SF0">
    <property type="entry name" value="2,3-BISPHOSPHOGLYCERATE-INDEPENDENT PHOSPHOGLYCERATE MUTASE"/>
    <property type="match status" value="1"/>
</dbReference>
<dbReference type="Pfam" id="PF06415">
    <property type="entry name" value="iPGM_N"/>
    <property type="match status" value="1"/>
</dbReference>
<dbReference type="Pfam" id="PF01676">
    <property type="entry name" value="Metalloenzyme"/>
    <property type="match status" value="1"/>
</dbReference>
<dbReference type="PIRSF" id="PIRSF001492">
    <property type="entry name" value="IPGAM"/>
    <property type="match status" value="1"/>
</dbReference>
<dbReference type="SUPFAM" id="SSF64158">
    <property type="entry name" value="2,3-Bisphosphoglycerate-independent phosphoglycerate mutase, substrate-binding domain"/>
    <property type="match status" value="1"/>
</dbReference>
<dbReference type="SUPFAM" id="SSF53649">
    <property type="entry name" value="Alkaline phosphatase-like"/>
    <property type="match status" value="1"/>
</dbReference>
<evidence type="ECO:0000255" key="1">
    <source>
        <dbReference type="HAMAP-Rule" id="MF_01038"/>
    </source>
</evidence>
<reference key="1">
    <citation type="journal article" date="1996" name="DNA Res.">
        <title>Sequence analysis of the genome of the unicellular cyanobacterium Synechocystis sp. strain PCC6803. II. Sequence determination of the entire genome and assignment of potential protein-coding regions.</title>
        <authorList>
            <person name="Kaneko T."/>
            <person name="Sato S."/>
            <person name="Kotani H."/>
            <person name="Tanaka A."/>
            <person name="Asamizu E."/>
            <person name="Nakamura Y."/>
            <person name="Miyajima N."/>
            <person name="Hirosawa M."/>
            <person name="Sugiura M."/>
            <person name="Sasamoto S."/>
            <person name="Kimura T."/>
            <person name="Hosouchi T."/>
            <person name="Matsuno A."/>
            <person name="Muraki A."/>
            <person name="Nakazaki N."/>
            <person name="Naruo K."/>
            <person name="Okumura S."/>
            <person name="Shimpo S."/>
            <person name="Takeuchi C."/>
            <person name="Wada T."/>
            <person name="Watanabe A."/>
            <person name="Yamada M."/>
            <person name="Yasuda M."/>
            <person name="Tabata S."/>
        </authorList>
    </citation>
    <scope>NUCLEOTIDE SEQUENCE [LARGE SCALE GENOMIC DNA]</scope>
    <source>
        <strain>ATCC 27184 / PCC 6803 / Kazusa</strain>
    </source>
</reference>
<protein>
    <recommendedName>
        <fullName evidence="1">2,3-bisphosphoglycerate-independent phosphoglycerate mutase</fullName>
        <shortName evidence="1">BPG-independent PGAM</shortName>
        <shortName evidence="1">Phosphoglyceromutase</shortName>
        <shortName evidence="1">iPGM</shortName>
        <ecNumber evidence="1">5.4.2.12</ecNumber>
    </recommendedName>
</protein>
<name>GPMI_SYNY3</name>
<sequence length="532" mass="57982">MAEAPIAPVVLVILDGWGYRPDTRANAIAQANTPIMDSLIAAYPNTLVNTSGKDVGLPKGQMGNSEVGHLNLGAGRVVPQELVRISDAIEDGTFFDNQALIEVCQRVRDRRGKLHLIGLCSDGGVHSHIDHLLGLIDLAKLQGISQLCIHAITDGRDTPTNEGAHFVQQIQAHLEKIGLGRIVSVSGRYYALDRDRRWDRVEKAYRVMTEDGVGDGRSAAQVIKDYYASDITDEFIPPTRIGAGAIASGDGVIFYNFRPDRARQLCYALVNPSFDGFPRERIQPLDFVTFTQYDPALPVVVAFEPQNLNNILGEIISRQGMKQFRTAETEKYPHVTYFFNGGLEQPFAGEDRELIQSPMVSTYDKAPQMSAKAVTDAVCRAMEKGIYSLVVVNYANPDMVGHTGKLKEAIQAIETVDLNLGRLLASAAKVGGTVLITADHGNAEYMSDESGNPWTAHTTNPVPFILVEGEGRKIPGHGGEVKLREGGKLADIAPTILDILQLPVPAEMTGKTLIDQPLVEIKANRTPVNLSR</sequence>
<organism>
    <name type="scientific">Synechocystis sp. (strain ATCC 27184 / PCC 6803 / Kazusa)</name>
    <dbReference type="NCBI Taxonomy" id="1111708"/>
    <lineage>
        <taxon>Bacteria</taxon>
        <taxon>Bacillati</taxon>
        <taxon>Cyanobacteriota</taxon>
        <taxon>Cyanophyceae</taxon>
        <taxon>Synechococcales</taxon>
        <taxon>Merismopediaceae</taxon>
        <taxon>Synechocystis</taxon>
    </lineage>
</organism>
<feature type="chain" id="PRO_0000212222" description="2,3-bisphosphoglycerate-independent phosphoglycerate mutase">
    <location>
        <begin position="1"/>
        <end position="532"/>
    </location>
</feature>
<feature type="active site" description="Phosphoserine intermediate" evidence="1">
    <location>
        <position position="65"/>
    </location>
</feature>
<feature type="binding site" evidence="1">
    <location>
        <position position="15"/>
    </location>
    <ligand>
        <name>Mn(2+)</name>
        <dbReference type="ChEBI" id="CHEBI:29035"/>
        <label>2</label>
    </ligand>
</feature>
<feature type="binding site" evidence="1">
    <location>
        <position position="65"/>
    </location>
    <ligand>
        <name>Mn(2+)</name>
        <dbReference type="ChEBI" id="CHEBI:29035"/>
        <label>2</label>
    </ligand>
</feature>
<feature type="binding site" evidence="1">
    <location>
        <position position="126"/>
    </location>
    <ligand>
        <name>substrate</name>
    </ligand>
</feature>
<feature type="binding site" evidence="1">
    <location>
        <begin position="156"/>
        <end position="157"/>
    </location>
    <ligand>
        <name>substrate</name>
    </ligand>
</feature>
<feature type="binding site" evidence="1">
    <location>
        <position position="188"/>
    </location>
    <ligand>
        <name>substrate</name>
    </ligand>
</feature>
<feature type="binding site" evidence="1">
    <location>
        <position position="194"/>
    </location>
    <ligand>
        <name>substrate</name>
    </ligand>
</feature>
<feature type="binding site" evidence="1">
    <location>
        <begin position="258"/>
        <end position="261"/>
    </location>
    <ligand>
        <name>substrate</name>
    </ligand>
</feature>
<feature type="binding site" evidence="1">
    <location>
        <position position="331"/>
    </location>
    <ligand>
        <name>substrate</name>
    </ligand>
</feature>
<feature type="binding site" evidence="1">
    <location>
        <position position="398"/>
    </location>
    <ligand>
        <name>Mn(2+)</name>
        <dbReference type="ChEBI" id="CHEBI:29035"/>
        <label>1</label>
    </ligand>
</feature>
<feature type="binding site" evidence="1">
    <location>
        <position position="402"/>
    </location>
    <ligand>
        <name>Mn(2+)</name>
        <dbReference type="ChEBI" id="CHEBI:29035"/>
        <label>1</label>
    </ligand>
</feature>
<feature type="binding site" evidence="1">
    <location>
        <position position="439"/>
    </location>
    <ligand>
        <name>Mn(2+)</name>
        <dbReference type="ChEBI" id="CHEBI:29035"/>
        <label>2</label>
    </ligand>
</feature>
<feature type="binding site" evidence="1">
    <location>
        <position position="440"/>
    </location>
    <ligand>
        <name>Mn(2+)</name>
        <dbReference type="ChEBI" id="CHEBI:29035"/>
        <label>2</label>
    </ligand>
</feature>
<feature type="binding site" evidence="1">
    <location>
        <position position="457"/>
    </location>
    <ligand>
        <name>Mn(2+)</name>
        <dbReference type="ChEBI" id="CHEBI:29035"/>
        <label>1</label>
    </ligand>
</feature>
<accession>P74507</accession>
<keyword id="KW-0324">Glycolysis</keyword>
<keyword id="KW-0413">Isomerase</keyword>
<keyword id="KW-0464">Manganese</keyword>
<keyword id="KW-0479">Metal-binding</keyword>
<keyword id="KW-1185">Reference proteome</keyword>
<proteinExistence type="inferred from homology"/>
<gene>
    <name evidence="1" type="primary">gpmI</name>
    <name type="synonym">pgm</name>
    <name type="ordered locus">slr1945</name>
</gene>